<proteinExistence type="inferred from homology"/>
<keyword id="KW-0326">Glycosidase</keyword>
<keyword id="KW-0378">Hydrolase</keyword>
<protein>
    <recommendedName>
        <fullName>Beta-galactosidase</fullName>
        <shortName>Beta-gal</shortName>
        <ecNumber>3.2.1.23</ecNumber>
    </recommendedName>
    <alternativeName>
        <fullName>Lactase</fullName>
    </alternativeName>
</protein>
<gene>
    <name type="primary">lacZ</name>
</gene>
<evidence type="ECO:0000250" key="1"/>
<evidence type="ECO:0000305" key="2"/>
<reference key="1">
    <citation type="journal article" date="1991" name="J. Gen. Microbiol.">
        <title>Analysis of the lacZ sequences from two Streptococcus thermophilus strains: comparison with the Escherichia coli and Lactobacillus bulgaricus beta-galactosidase sequences.</title>
        <authorList>
            <person name="Schroeder C.J."/>
            <person name="Robert C."/>
            <person name="Lenzen G."/>
            <person name="McKay L.L."/>
            <person name="Mercenier A."/>
        </authorList>
    </citation>
    <scope>NUCLEOTIDE SEQUENCE [GENOMIC DNA]</scope>
    <source>
        <strain>A054</strain>
    </source>
</reference>
<reference key="2">
    <citation type="journal article" date="1989" name="J. Bacteriol.">
        <title>Lactose transport system of Streptococcus thermophilus: a hybrid protein with homology to the melibiose carrier and enzyme III of phosphoenolpyruvate-dependent phosphotransferase systems.</title>
        <authorList>
            <person name="Poolman B."/>
            <person name="Royer T.J."/>
            <person name="Mainzer S.E."/>
            <person name="Schmidt B.F."/>
        </authorList>
    </citation>
    <scope>NUCLEOTIDE SEQUENCE [GENOMIC DNA] OF 1-108</scope>
</reference>
<organism>
    <name type="scientific">Streptococcus thermophilus</name>
    <dbReference type="NCBI Taxonomy" id="1308"/>
    <lineage>
        <taxon>Bacteria</taxon>
        <taxon>Bacillati</taxon>
        <taxon>Bacillota</taxon>
        <taxon>Bacilli</taxon>
        <taxon>Lactobacillales</taxon>
        <taxon>Streptococcaceae</taxon>
        <taxon>Streptococcus</taxon>
    </lineage>
</organism>
<dbReference type="EC" id="3.2.1.23"/>
<dbReference type="EMBL" id="M63636">
    <property type="protein sequence ID" value="AAA63532.1"/>
    <property type="molecule type" value="Genomic_DNA"/>
</dbReference>
<dbReference type="EMBL" id="M63636">
    <property type="protein sequence ID" value="AAA63533.1"/>
    <property type="molecule type" value="Genomic_DNA"/>
</dbReference>
<dbReference type="EMBL" id="M23009">
    <property type="protein sequence ID" value="AAA26911.1"/>
    <property type="molecule type" value="Genomic_DNA"/>
</dbReference>
<dbReference type="PIR" id="A49750">
    <property type="entry name" value="A49750"/>
</dbReference>
<dbReference type="RefSeq" id="WP_011226267.1">
    <property type="nucleotide sequence ID" value="NZ_WMLD01000001.1"/>
</dbReference>
<dbReference type="SMR" id="P23989"/>
<dbReference type="CAZy" id="GH2">
    <property type="family name" value="Glycoside Hydrolase Family 2"/>
</dbReference>
<dbReference type="KEGG" id="sths:AVT04_07950"/>
<dbReference type="eggNOG" id="COG3250">
    <property type="taxonomic scope" value="Bacteria"/>
</dbReference>
<dbReference type="OMA" id="WASAMLD"/>
<dbReference type="OrthoDB" id="9762066at2"/>
<dbReference type="SABIO-RK" id="P23989"/>
<dbReference type="GO" id="GO:0009341">
    <property type="term" value="C:beta-galactosidase complex"/>
    <property type="evidence" value="ECO:0007669"/>
    <property type="project" value="InterPro"/>
</dbReference>
<dbReference type="GO" id="GO:0004565">
    <property type="term" value="F:beta-galactosidase activity"/>
    <property type="evidence" value="ECO:0007669"/>
    <property type="project" value="UniProtKB-EC"/>
</dbReference>
<dbReference type="GO" id="GO:0030246">
    <property type="term" value="F:carbohydrate binding"/>
    <property type="evidence" value="ECO:0007669"/>
    <property type="project" value="InterPro"/>
</dbReference>
<dbReference type="GO" id="GO:0005990">
    <property type="term" value="P:lactose catabolic process"/>
    <property type="evidence" value="ECO:0007669"/>
    <property type="project" value="TreeGrafter"/>
</dbReference>
<dbReference type="Gene3D" id="2.70.98.10">
    <property type="match status" value="1"/>
</dbReference>
<dbReference type="Gene3D" id="2.60.120.260">
    <property type="entry name" value="Galactose-binding domain-like"/>
    <property type="match status" value="1"/>
</dbReference>
<dbReference type="Gene3D" id="3.20.20.80">
    <property type="entry name" value="Glycosidases"/>
    <property type="match status" value="1"/>
</dbReference>
<dbReference type="Gene3D" id="2.60.40.10">
    <property type="entry name" value="Immunoglobulins"/>
    <property type="match status" value="2"/>
</dbReference>
<dbReference type="InterPro" id="IPR004199">
    <property type="entry name" value="B-gal_small/dom_5"/>
</dbReference>
<dbReference type="InterPro" id="IPR050347">
    <property type="entry name" value="Bact_Beta-galactosidase"/>
</dbReference>
<dbReference type="InterPro" id="IPR036156">
    <property type="entry name" value="Beta-gal/glucu_dom_sf"/>
</dbReference>
<dbReference type="InterPro" id="IPR011013">
    <property type="entry name" value="Gal_mutarotase_sf_dom"/>
</dbReference>
<dbReference type="InterPro" id="IPR008979">
    <property type="entry name" value="Galactose-bd-like_sf"/>
</dbReference>
<dbReference type="InterPro" id="IPR014718">
    <property type="entry name" value="GH-type_carb-bd"/>
</dbReference>
<dbReference type="InterPro" id="IPR006101">
    <property type="entry name" value="Glyco_hydro_2"/>
</dbReference>
<dbReference type="InterPro" id="IPR023232">
    <property type="entry name" value="Glyco_hydro_2_AS"/>
</dbReference>
<dbReference type="InterPro" id="IPR006103">
    <property type="entry name" value="Glyco_hydro_2_cat"/>
</dbReference>
<dbReference type="InterPro" id="IPR023230">
    <property type="entry name" value="Glyco_hydro_2_CS"/>
</dbReference>
<dbReference type="InterPro" id="IPR006102">
    <property type="entry name" value="Glyco_hydro_2_Ig-like"/>
</dbReference>
<dbReference type="InterPro" id="IPR006104">
    <property type="entry name" value="Glyco_hydro_2_N"/>
</dbReference>
<dbReference type="InterPro" id="IPR017853">
    <property type="entry name" value="Glycoside_hydrolase_SF"/>
</dbReference>
<dbReference type="InterPro" id="IPR013783">
    <property type="entry name" value="Ig-like_fold"/>
</dbReference>
<dbReference type="InterPro" id="IPR032312">
    <property type="entry name" value="LacZ_4"/>
</dbReference>
<dbReference type="PANTHER" id="PTHR46323">
    <property type="entry name" value="BETA-GALACTOSIDASE"/>
    <property type="match status" value="1"/>
</dbReference>
<dbReference type="PANTHER" id="PTHR46323:SF2">
    <property type="entry name" value="BETA-GALACTOSIDASE"/>
    <property type="match status" value="1"/>
</dbReference>
<dbReference type="Pfam" id="PF02929">
    <property type="entry name" value="Bgal_small_N"/>
    <property type="match status" value="1"/>
</dbReference>
<dbReference type="Pfam" id="PF00703">
    <property type="entry name" value="Glyco_hydro_2"/>
    <property type="match status" value="1"/>
</dbReference>
<dbReference type="Pfam" id="PF02836">
    <property type="entry name" value="Glyco_hydro_2_C"/>
    <property type="match status" value="1"/>
</dbReference>
<dbReference type="Pfam" id="PF02837">
    <property type="entry name" value="Glyco_hydro_2_N"/>
    <property type="match status" value="1"/>
</dbReference>
<dbReference type="Pfam" id="PF16353">
    <property type="entry name" value="LacZ_4"/>
    <property type="match status" value="1"/>
</dbReference>
<dbReference type="PRINTS" id="PR00132">
    <property type="entry name" value="GLHYDRLASE2"/>
</dbReference>
<dbReference type="SMART" id="SM01038">
    <property type="entry name" value="Bgal_small_N"/>
    <property type="match status" value="1"/>
</dbReference>
<dbReference type="SUPFAM" id="SSF51445">
    <property type="entry name" value="(Trans)glycosidases"/>
    <property type="match status" value="1"/>
</dbReference>
<dbReference type="SUPFAM" id="SSF49303">
    <property type="entry name" value="beta-Galactosidase/glucuronidase domain"/>
    <property type="match status" value="2"/>
</dbReference>
<dbReference type="SUPFAM" id="SSF74650">
    <property type="entry name" value="Galactose mutarotase-like"/>
    <property type="match status" value="1"/>
</dbReference>
<dbReference type="SUPFAM" id="SSF49785">
    <property type="entry name" value="Galactose-binding domain-like"/>
    <property type="match status" value="1"/>
</dbReference>
<dbReference type="PROSITE" id="PS00719">
    <property type="entry name" value="GLYCOSYL_HYDROL_F2_1"/>
    <property type="match status" value="1"/>
</dbReference>
<dbReference type="PROSITE" id="PS00608">
    <property type="entry name" value="GLYCOSYL_HYDROL_F2_2"/>
    <property type="match status" value="1"/>
</dbReference>
<feature type="chain" id="PRO_0000057676" description="Beta-galactosidase">
    <location>
        <begin position="1"/>
        <end position="1026"/>
    </location>
</feature>
<feature type="active site" description="Proton donor" evidence="1">
    <location>
        <position position="458"/>
    </location>
</feature>
<feature type="active site" description="Nucleophile" evidence="1">
    <location>
        <position position="546"/>
    </location>
</feature>
<name>BGAL_STRTR</name>
<comment type="catalytic activity">
    <reaction>
        <text>Hydrolysis of terminal non-reducing beta-D-galactose residues in beta-D-galactosides.</text>
        <dbReference type="EC" id="3.2.1.23"/>
    </reaction>
</comment>
<comment type="similarity">
    <text evidence="2">Belongs to the glycosyl hydrolase 2 family.</text>
</comment>
<sequence>MNMTEKIQTYLNDPKIVSVNTVDAHSDHKYFESLEEFSEGEMKLRQSLNGKWKIHYAQNTNQVLKDFYKTEFDETDLNFINVPGHLELQGFGSPQYVNTQYPWDGKEFLRPPQVPQESNAVASYVKHFTLNDALKDKKVFISFQGVATSIFVWVNGNFVGYSEDSFTPSEFEISDYLVEGDNKLAVAVYRYSTASWLEDQDFWRLYGIFRDVYLYAIPKVHVQDLFVKGDYDYQTKAGQLDIDLKTVGDYEDKKIKYVLSDYEGIVTEGDASVNGDGELSVSLENLKIKPWSAESPKLYDLILHVLDDDQVVEVVPVKVGFRRFEIKDKLMLLNGKRIVFKGVNRHEFNARTGRCITEEDMLWDIKVMKQHNINAVRTSHYPNQTRWYELCDEYGLYVIDEANLETHGTWQKLGLCEPSWNIPASEPEWLPACLDRANNMFQRDKNHASVIIWSCGNESYAGKDIADMADYFRSVDNTRPVHYEGVAWCREFDYITDIESRMYAKPADIEEYLTTGKLVDLSSVSDKHFASGNLTNKPQKPYISCEYMHTMGNSGGGLQLYTDLEKYPEYQGGFIWDFIDQAIYKTLPNGSEFLSYGGDWHDRPSDYEFCGNGIVFADRTLTPKLQTVKHLYSNIKIAVDEKSVTIKNDNLFEDLSAYTFLARVYEDGRKVSESEYHFDVKPGEEATFPVNFVVEASNSEQIYEVACVLREATEWAPKGHEIVRGQYVVEKISTETPVKAPLNVVEGDFNIGIQGQNFSILLSRAQNTLVSAKYNGVEFIEKGPKLSFTRAYTDNDRGAGYPFEMAGWKVAGNYSKVTDTQIQIEDDSVKVTYVHELPGLSDVEVKVTYQVDYKGRIFVTANYDGKAGLPNFPEFGLEFAIGSQFTNLSYYGYGAEESYRDKLPGAYLGRYETSVEKTFAPYLMPQESGNHYGTREFTVSDDNHNGLKFTALNKAFEFSALRNSTEQIENARHQYELQESDATWIKVLAAQMGVGGDDTWGAPVHDEFLLSSADSYQLSFMIEPLN</sequence>
<accession>P23989</accession>
<accession>Q6LDR7</accession>